<proteinExistence type="inferred from homology"/>
<gene>
    <name evidence="1" type="primary">hutI</name>
    <name type="ordered locus">PBPRA2170</name>
</gene>
<evidence type="ECO:0000255" key="1">
    <source>
        <dbReference type="HAMAP-Rule" id="MF_00372"/>
    </source>
</evidence>
<name>HUTI_PHOPR</name>
<dbReference type="EC" id="3.5.2.7" evidence="1"/>
<dbReference type="EMBL" id="CR378670">
    <property type="protein sequence ID" value="CAG20567.1"/>
    <property type="molecule type" value="Genomic_DNA"/>
</dbReference>
<dbReference type="SMR" id="Q6LQ59"/>
<dbReference type="STRING" id="298386.PBPRA2170"/>
<dbReference type="KEGG" id="ppr:PBPRA2170"/>
<dbReference type="eggNOG" id="COG1228">
    <property type="taxonomic scope" value="Bacteria"/>
</dbReference>
<dbReference type="HOGENOM" id="CLU_041647_0_0_6"/>
<dbReference type="UniPathway" id="UPA00379">
    <property type="reaction ID" value="UER00551"/>
</dbReference>
<dbReference type="Proteomes" id="UP000000593">
    <property type="component" value="Chromosome 1"/>
</dbReference>
<dbReference type="GO" id="GO:0005737">
    <property type="term" value="C:cytoplasm"/>
    <property type="evidence" value="ECO:0007669"/>
    <property type="project" value="UniProtKB-SubCell"/>
</dbReference>
<dbReference type="GO" id="GO:0050480">
    <property type="term" value="F:imidazolonepropionase activity"/>
    <property type="evidence" value="ECO:0007669"/>
    <property type="project" value="UniProtKB-UniRule"/>
</dbReference>
<dbReference type="GO" id="GO:0005506">
    <property type="term" value="F:iron ion binding"/>
    <property type="evidence" value="ECO:0007669"/>
    <property type="project" value="UniProtKB-UniRule"/>
</dbReference>
<dbReference type="GO" id="GO:0008270">
    <property type="term" value="F:zinc ion binding"/>
    <property type="evidence" value="ECO:0007669"/>
    <property type="project" value="UniProtKB-UniRule"/>
</dbReference>
<dbReference type="GO" id="GO:0019556">
    <property type="term" value="P:L-histidine catabolic process to glutamate and formamide"/>
    <property type="evidence" value="ECO:0007669"/>
    <property type="project" value="UniProtKB-UniPathway"/>
</dbReference>
<dbReference type="GO" id="GO:0019557">
    <property type="term" value="P:L-histidine catabolic process to glutamate and formate"/>
    <property type="evidence" value="ECO:0007669"/>
    <property type="project" value="UniProtKB-UniPathway"/>
</dbReference>
<dbReference type="CDD" id="cd01296">
    <property type="entry name" value="Imidazolone-5PH"/>
    <property type="match status" value="1"/>
</dbReference>
<dbReference type="FunFam" id="3.20.20.140:FF:000007">
    <property type="entry name" value="Imidazolonepropionase"/>
    <property type="match status" value="1"/>
</dbReference>
<dbReference type="Gene3D" id="3.20.20.140">
    <property type="entry name" value="Metal-dependent hydrolases"/>
    <property type="match status" value="1"/>
</dbReference>
<dbReference type="Gene3D" id="2.30.40.10">
    <property type="entry name" value="Urease, subunit C, domain 1"/>
    <property type="match status" value="1"/>
</dbReference>
<dbReference type="HAMAP" id="MF_00372">
    <property type="entry name" value="HutI"/>
    <property type="match status" value="1"/>
</dbReference>
<dbReference type="InterPro" id="IPR006680">
    <property type="entry name" value="Amidohydro-rel"/>
</dbReference>
<dbReference type="InterPro" id="IPR005920">
    <property type="entry name" value="HutI"/>
</dbReference>
<dbReference type="InterPro" id="IPR011059">
    <property type="entry name" value="Metal-dep_hydrolase_composite"/>
</dbReference>
<dbReference type="InterPro" id="IPR032466">
    <property type="entry name" value="Metal_Hydrolase"/>
</dbReference>
<dbReference type="NCBIfam" id="TIGR01224">
    <property type="entry name" value="hutI"/>
    <property type="match status" value="1"/>
</dbReference>
<dbReference type="PANTHER" id="PTHR42752">
    <property type="entry name" value="IMIDAZOLONEPROPIONASE"/>
    <property type="match status" value="1"/>
</dbReference>
<dbReference type="PANTHER" id="PTHR42752:SF1">
    <property type="entry name" value="IMIDAZOLONEPROPIONASE-RELATED"/>
    <property type="match status" value="1"/>
</dbReference>
<dbReference type="Pfam" id="PF01979">
    <property type="entry name" value="Amidohydro_1"/>
    <property type="match status" value="1"/>
</dbReference>
<dbReference type="SUPFAM" id="SSF51338">
    <property type="entry name" value="Composite domain of metallo-dependent hydrolases"/>
    <property type="match status" value="1"/>
</dbReference>
<dbReference type="SUPFAM" id="SSF51556">
    <property type="entry name" value="Metallo-dependent hydrolases"/>
    <property type="match status" value="1"/>
</dbReference>
<feature type="chain" id="PRO_0000306479" description="Imidazolonepropionase">
    <location>
        <begin position="1"/>
        <end position="411"/>
    </location>
</feature>
<feature type="binding site" evidence="1">
    <location>
        <position position="75"/>
    </location>
    <ligand>
        <name>Fe(3+)</name>
        <dbReference type="ChEBI" id="CHEBI:29034"/>
    </ligand>
</feature>
<feature type="binding site" evidence="1">
    <location>
        <position position="75"/>
    </location>
    <ligand>
        <name>Zn(2+)</name>
        <dbReference type="ChEBI" id="CHEBI:29105"/>
    </ligand>
</feature>
<feature type="binding site" evidence="1">
    <location>
        <position position="77"/>
    </location>
    <ligand>
        <name>Fe(3+)</name>
        <dbReference type="ChEBI" id="CHEBI:29034"/>
    </ligand>
</feature>
<feature type="binding site" evidence="1">
    <location>
        <position position="77"/>
    </location>
    <ligand>
        <name>Zn(2+)</name>
        <dbReference type="ChEBI" id="CHEBI:29105"/>
    </ligand>
</feature>
<feature type="binding site" evidence="1">
    <location>
        <position position="84"/>
    </location>
    <ligand>
        <name>4-imidazolone-5-propanoate</name>
        <dbReference type="ChEBI" id="CHEBI:77893"/>
    </ligand>
</feature>
<feature type="binding site" evidence="1">
    <location>
        <position position="147"/>
    </location>
    <ligand>
        <name>4-imidazolone-5-propanoate</name>
        <dbReference type="ChEBI" id="CHEBI:77893"/>
    </ligand>
</feature>
<feature type="binding site" evidence="1">
    <location>
        <position position="147"/>
    </location>
    <ligand>
        <name>N-formimidoyl-L-glutamate</name>
        <dbReference type="ChEBI" id="CHEBI:58928"/>
    </ligand>
</feature>
<feature type="binding site" evidence="1">
    <location>
        <position position="180"/>
    </location>
    <ligand>
        <name>4-imidazolone-5-propanoate</name>
        <dbReference type="ChEBI" id="CHEBI:77893"/>
    </ligand>
</feature>
<feature type="binding site" evidence="1">
    <location>
        <position position="245"/>
    </location>
    <ligand>
        <name>Fe(3+)</name>
        <dbReference type="ChEBI" id="CHEBI:29034"/>
    </ligand>
</feature>
<feature type="binding site" evidence="1">
    <location>
        <position position="245"/>
    </location>
    <ligand>
        <name>Zn(2+)</name>
        <dbReference type="ChEBI" id="CHEBI:29105"/>
    </ligand>
</feature>
<feature type="binding site" evidence="1">
    <location>
        <position position="248"/>
    </location>
    <ligand>
        <name>4-imidazolone-5-propanoate</name>
        <dbReference type="ChEBI" id="CHEBI:77893"/>
    </ligand>
</feature>
<feature type="binding site" evidence="1">
    <location>
        <position position="320"/>
    </location>
    <ligand>
        <name>Fe(3+)</name>
        <dbReference type="ChEBI" id="CHEBI:29034"/>
    </ligand>
</feature>
<feature type="binding site" evidence="1">
    <location>
        <position position="320"/>
    </location>
    <ligand>
        <name>Zn(2+)</name>
        <dbReference type="ChEBI" id="CHEBI:29105"/>
    </ligand>
</feature>
<feature type="binding site" evidence="1">
    <location>
        <position position="322"/>
    </location>
    <ligand>
        <name>N-formimidoyl-L-glutamate</name>
        <dbReference type="ChEBI" id="CHEBI:58928"/>
    </ligand>
</feature>
<feature type="binding site" evidence="1">
    <location>
        <position position="324"/>
    </location>
    <ligand>
        <name>N-formimidoyl-L-glutamate</name>
        <dbReference type="ChEBI" id="CHEBI:58928"/>
    </ligand>
</feature>
<feature type="binding site" evidence="1">
    <location>
        <position position="325"/>
    </location>
    <ligand>
        <name>4-imidazolone-5-propanoate</name>
        <dbReference type="ChEBI" id="CHEBI:77893"/>
    </ligand>
</feature>
<accession>Q6LQ59</accession>
<keyword id="KW-0963">Cytoplasm</keyword>
<keyword id="KW-0369">Histidine metabolism</keyword>
<keyword id="KW-0378">Hydrolase</keyword>
<keyword id="KW-0408">Iron</keyword>
<keyword id="KW-0479">Metal-binding</keyword>
<keyword id="KW-1185">Reference proteome</keyword>
<keyword id="KW-0862">Zinc</keyword>
<sequence>MLTNLRLVTLSSETSADNNGYQIIEDGMVGITNGKIMFVGSVSDSPLACHNDLHGHPDVIDCGNALVTPGLIDCHTHLVFAGNRANEFEQRLNGMPYEEMAKRGGGIISTVQATREATEDELYQLAIKRLNGLKRDGVTTIEIKSGYGLTLDDELKMLRVARRIGDMPDIKVSTTLLAAHAVPPEYKNRADDYIEYVCQHIIPAAVEQGLADYVDVFCEGIGFSTQQCQRVFETAKHYGLGIKGHTEQLSNLGGSALAARMGATSVDHIEHLDHDGVAALAANNTVATLLPGAYYFLRETQRPPIEHLRKLQVPMAISTDFNPGTSPIASLRTMMNMACTFFRLTPEECLRGVTCNAAQALGLEASRGKISVGMEADLALWDIDTPAELSYRLGVPDLVARIVDGELFYAK</sequence>
<reference key="1">
    <citation type="journal article" date="2005" name="Science">
        <title>Life at depth: Photobacterium profundum genome sequence and expression analysis.</title>
        <authorList>
            <person name="Vezzi A."/>
            <person name="Campanaro S."/>
            <person name="D'Angelo M."/>
            <person name="Simonato F."/>
            <person name="Vitulo N."/>
            <person name="Lauro F.M."/>
            <person name="Cestaro A."/>
            <person name="Malacrida G."/>
            <person name="Simionati B."/>
            <person name="Cannata N."/>
            <person name="Romualdi C."/>
            <person name="Bartlett D.H."/>
            <person name="Valle G."/>
        </authorList>
    </citation>
    <scope>NUCLEOTIDE SEQUENCE [LARGE SCALE GENOMIC DNA]</scope>
    <source>
        <strain>ATCC BAA-1253 / SS9</strain>
    </source>
</reference>
<comment type="function">
    <text evidence="1">Catalyzes the hydrolytic cleavage of the carbon-nitrogen bond in imidazolone-5-propanoate to yield N-formimidoyl-L-glutamate. It is the third step in the universal histidine degradation pathway.</text>
</comment>
<comment type="catalytic activity">
    <reaction evidence="1">
        <text>4-imidazolone-5-propanoate + H2O = N-formimidoyl-L-glutamate</text>
        <dbReference type="Rhea" id="RHEA:23660"/>
        <dbReference type="ChEBI" id="CHEBI:15377"/>
        <dbReference type="ChEBI" id="CHEBI:58928"/>
        <dbReference type="ChEBI" id="CHEBI:77893"/>
        <dbReference type="EC" id="3.5.2.7"/>
    </reaction>
</comment>
<comment type="cofactor">
    <cofactor evidence="1">
        <name>Zn(2+)</name>
        <dbReference type="ChEBI" id="CHEBI:29105"/>
    </cofactor>
    <cofactor evidence="1">
        <name>Fe(3+)</name>
        <dbReference type="ChEBI" id="CHEBI:29034"/>
    </cofactor>
    <text evidence="1">Binds 1 zinc or iron ion per subunit.</text>
</comment>
<comment type="pathway">
    <text evidence="1">Amino-acid degradation; L-histidine degradation into L-glutamate; N-formimidoyl-L-glutamate from L-histidine: step 3/3.</text>
</comment>
<comment type="subcellular location">
    <subcellularLocation>
        <location evidence="1">Cytoplasm</location>
    </subcellularLocation>
</comment>
<comment type="similarity">
    <text evidence="1">Belongs to the metallo-dependent hydrolases superfamily. HutI family.</text>
</comment>
<protein>
    <recommendedName>
        <fullName evidence="1">Imidazolonepropionase</fullName>
        <ecNumber evidence="1">3.5.2.7</ecNumber>
    </recommendedName>
    <alternativeName>
        <fullName evidence="1">Imidazolone-5-propionate hydrolase</fullName>
    </alternativeName>
</protein>
<organism>
    <name type="scientific">Photobacterium profundum (strain SS9)</name>
    <dbReference type="NCBI Taxonomy" id="298386"/>
    <lineage>
        <taxon>Bacteria</taxon>
        <taxon>Pseudomonadati</taxon>
        <taxon>Pseudomonadota</taxon>
        <taxon>Gammaproteobacteria</taxon>
        <taxon>Vibrionales</taxon>
        <taxon>Vibrionaceae</taxon>
        <taxon>Photobacterium</taxon>
    </lineage>
</organism>